<name>RL5_THEVO</name>
<feature type="chain" id="PRO_0000125072" description="Large ribosomal subunit protein uL5">
    <location>
        <begin position="1"/>
        <end position="170"/>
    </location>
</feature>
<accession>Q97BW3</accession>
<proteinExistence type="inferred from homology"/>
<protein>
    <recommendedName>
        <fullName evidence="1">Large ribosomal subunit protein uL5</fullName>
    </recommendedName>
    <alternativeName>
        <fullName evidence="2">50S ribosomal protein L5</fullName>
    </alternativeName>
</protein>
<sequence length="170" mass="19385">MNQMQEIIIDKVVVNIGVGQAGDRLTKAAKVLEMLTGHKPTQTLAKKSVRDFNIRKRLPIGVKVTLRKDDAVNFLNKALYVKDYKIPDYSFDKHGNAYFGISDYTDFKGMKYDPDIGIFGMDVAIVLKRRGGYRIEKRKIGKKTIPSSIRIKKDEAVEFLEKNFKVSVVR</sequence>
<comment type="function">
    <text evidence="1">This is one of the proteins that bind and probably mediate the attachment of the 5S RNA into the large ribosomal subunit, where it forms part of the central protuberance. In the 70S ribosome it contacts protein S13 of the 30S subunit (bridge B1b), connecting the 2 subunits; this bridge is implicated in subunit movement. May contact the P site tRNA; the 5S rRNA and some of its associated proteins might help stabilize positioning of ribosome-bound tRNAs.</text>
</comment>
<comment type="subunit">
    <text evidence="1">Part of the 50S ribosomal subunit; contacts the 5S rRNA and probably tRNA. Forms a bridge to the 30S subunit in the 70S ribosome.</text>
</comment>
<comment type="similarity">
    <text evidence="1">Belongs to the universal ribosomal protein uL5 family.</text>
</comment>
<reference key="1">
    <citation type="journal article" date="2000" name="Proc. Natl. Acad. Sci. U.S.A.">
        <title>Archaeal adaptation to higher temperatures revealed by genomic sequence of Thermoplasma volcanium.</title>
        <authorList>
            <person name="Kawashima T."/>
            <person name="Amano N."/>
            <person name="Koike H."/>
            <person name="Makino S."/>
            <person name="Higuchi S."/>
            <person name="Kawashima-Ohya Y."/>
            <person name="Watanabe K."/>
            <person name="Yamazaki M."/>
            <person name="Kanehori K."/>
            <person name="Kawamoto T."/>
            <person name="Nunoshiba T."/>
            <person name="Yamamoto Y."/>
            <person name="Aramaki H."/>
            <person name="Makino K."/>
            <person name="Suzuki M."/>
        </authorList>
    </citation>
    <scope>NUCLEOTIDE SEQUENCE [LARGE SCALE GENOMIC DNA]</scope>
    <source>
        <strain>ATCC 51530 / DSM 4299 / JCM 9571 / NBRC 15438 / GSS1</strain>
    </source>
</reference>
<gene>
    <name evidence="1" type="primary">rpl5</name>
    <name type="ordered locus">TV0342</name>
    <name type="ORF">TVG0339596</name>
</gene>
<keyword id="KW-0687">Ribonucleoprotein</keyword>
<keyword id="KW-0689">Ribosomal protein</keyword>
<keyword id="KW-0694">RNA-binding</keyword>
<keyword id="KW-0699">rRNA-binding</keyword>
<keyword id="KW-0820">tRNA-binding</keyword>
<dbReference type="EMBL" id="BA000011">
    <property type="protein sequence ID" value="BAB59484.1"/>
    <property type="molecule type" value="Genomic_DNA"/>
</dbReference>
<dbReference type="RefSeq" id="WP_010916596.1">
    <property type="nucleotide sequence ID" value="NC_002689.2"/>
</dbReference>
<dbReference type="SMR" id="Q97BW3"/>
<dbReference type="STRING" id="273116.gene:9381119"/>
<dbReference type="PaxDb" id="273116-14324557"/>
<dbReference type="GeneID" id="1440854"/>
<dbReference type="KEGG" id="tvo:TVG0339596"/>
<dbReference type="eggNOG" id="arCOG04092">
    <property type="taxonomic scope" value="Archaea"/>
</dbReference>
<dbReference type="HOGENOM" id="CLU_061015_3_0_2"/>
<dbReference type="OrthoDB" id="372044at2157"/>
<dbReference type="PhylomeDB" id="Q97BW3"/>
<dbReference type="Proteomes" id="UP000001017">
    <property type="component" value="Chromosome"/>
</dbReference>
<dbReference type="GO" id="GO:1990904">
    <property type="term" value="C:ribonucleoprotein complex"/>
    <property type="evidence" value="ECO:0007669"/>
    <property type="project" value="UniProtKB-KW"/>
</dbReference>
<dbReference type="GO" id="GO:0005840">
    <property type="term" value="C:ribosome"/>
    <property type="evidence" value="ECO:0007669"/>
    <property type="project" value="UniProtKB-KW"/>
</dbReference>
<dbReference type="GO" id="GO:0019843">
    <property type="term" value="F:rRNA binding"/>
    <property type="evidence" value="ECO:0007669"/>
    <property type="project" value="UniProtKB-UniRule"/>
</dbReference>
<dbReference type="GO" id="GO:0003735">
    <property type="term" value="F:structural constituent of ribosome"/>
    <property type="evidence" value="ECO:0007669"/>
    <property type="project" value="InterPro"/>
</dbReference>
<dbReference type="GO" id="GO:0000049">
    <property type="term" value="F:tRNA binding"/>
    <property type="evidence" value="ECO:0007669"/>
    <property type="project" value="UniProtKB-UniRule"/>
</dbReference>
<dbReference type="GO" id="GO:0006412">
    <property type="term" value="P:translation"/>
    <property type="evidence" value="ECO:0007669"/>
    <property type="project" value="UniProtKB-UniRule"/>
</dbReference>
<dbReference type="FunFam" id="3.30.1440.10:FF:000002">
    <property type="entry name" value="60S ribosomal protein L11"/>
    <property type="match status" value="1"/>
</dbReference>
<dbReference type="Gene3D" id="3.30.1440.10">
    <property type="match status" value="1"/>
</dbReference>
<dbReference type="HAMAP" id="MF_01333_A">
    <property type="entry name" value="Ribosomal_uL5_A"/>
    <property type="match status" value="1"/>
</dbReference>
<dbReference type="InterPro" id="IPR002132">
    <property type="entry name" value="Ribosomal_uL5"/>
</dbReference>
<dbReference type="InterPro" id="IPR022804">
    <property type="entry name" value="Ribosomal_uL5_arc"/>
</dbReference>
<dbReference type="InterPro" id="IPR031309">
    <property type="entry name" value="Ribosomal_uL5_C"/>
</dbReference>
<dbReference type="InterPro" id="IPR022803">
    <property type="entry name" value="Ribosomal_uL5_dom_sf"/>
</dbReference>
<dbReference type="InterPro" id="IPR031310">
    <property type="entry name" value="Ribosomal_uL5_N"/>
</dbReference>
<dbReference type="NCBIfam" id="NF003258">
    <property type="entry name" value="PRK04219.1"/>
    <property type="match status" value="1"/>
</dbReference>
<dbReference type="PANTHER" id="PTHR11994">
    <property type="entry name" value="60S RIBOSOMAL PROTEIN L11-RELATED"/>
    <property type="match status" value="1"/>
</dbReference>
<dbReference type="Pfam" id="PF00281">
    <property type="entry name" value="Ribosomal_L5"/>
    <property type="match status" value="1"/>
</dbReference>
<dbReference type="Pfam" id="PF00673">
    <property type="entry name" value="Ribosomal_L5_C"/>
    <property type="match status" value="1"/>
</dbReference>
<dbReference type="PIRSF" id="PIRSF002161">
    <property type="entry name" value="Ribosomal_L5"/>
    <property type="match status" value="1"/>
</dbReference>
<dbReference type="SUPFAM" id="SSF55282">
    <property type="entry name" value="RL5-like"/>
    <property type="match status" value="1"/>
</dbReference>
<organism>
    <name type="scientific">Thermoplasma volcanium (strain ATCC 51530 / DSM 4299 / JCM 9571 / NBRC 15438 / GSS1)</name>
    <dbReference type="NCBI Taxonomy" id="273116"/>
    <lineage>
        <taxon>Archaea</taxon>
        <taxon>Methanobacteriati</taxon>
        <taxon>Thermoplasmatota</taxon>
        <taxon>Thermoplasmata</taxon>
        <taxon>Thermoplasmatales</taxon>
        <taxon>Thermoplasmataceae</taxon>
        <taxon>Thermoplasma</taxon>
    </lineage>
</organism>
<evidence type="ECO:0000255" key="1">
    <source>
        <dbReference type="HAMAP-Rule" id="MF_01333"/>
    </source>
</evidence>
<evidence type="ECO:0000305" key="2"/>